<feature type="chain" id="PRO_1000065091" description="Ornithine carbamoyltransferase">
    <location>
        <begin position="1"/>
        <end position="300"/>
    </location>
</feature>
<feature type="binding site" evidence="2">
    <location>
        <begin position="49"/>
        <end position="52"/>
    </location>
    <ligand>
        <name>carbamoyl phosphate</name>
        <dbReference type="ChEBI" id="CHEBI:58228"/>
    </ligand>
</feature>
<feature type="binding site" evidence="2">
    <location>
        <position position="76"/>
    </location>
    <ligand>
        <name>carbamoyl phosphate</name>
        <dbReference type="ChEBI" id="CHEBI:58228"/>
    </ligand>
</feature>
<feature type="binding site" evidence="2">
    <location>
        <position position="100"/>
    </location>
    <ligand>
        <name>carbamoyl phosphate</name>
        <dbReference type="ChEBI" id="CHEBI:58228"/>
    </ligand>
</feature>
<feature type="binding site" evidence="2">
    <location>
        <begin position="127"/>
        <end position="130"/>
    </location>
    <ligand>
        <name>carbamoyl phosphate</name>
        <dbReference type="ChEBI" id="CHEBI:58228"/>
    </ligand>
</feature>
<feature type="binding site" evidence="2">
    <location>
        <position position="158"/>
    </location>
    <ligand>
        <name>L-ornithine</name>
        <dbReference type="ChEBI" id="CHEBI:46911"/>
    </ligand>
</feature>
<feature type="binding site" evidence="2">
    <location>
        <position position="218"/>
    </location>
    <ligand>
        <name>L-ornithine</name>
        <dbReference type="ChEBI" id="CHEBI:46911"/>
    </ligand>
</feature>
<feature type="binding site" evidence="2">
    <location>
        <begin position="222"/>
        <end position="223"/>
    </location>
    <ligand>
        <name>L-ornithine</name>
        <dbReference type="ChEBI" id="CHEBI:46911"/>
    </ligand>
</feature>
<feature type="binding site" evidence="2">
    <location>
        <begin position="258"/>
        <end position="259"/>
    </location>
    <ligand>
        <name>carbamoyl phosphate</name>
        <dbReference type="ChEBI" id="CHEBI:58228"/>
    </ligand>
</feature>
<feature type="binding site" evidence="2">
    <location>
        <position position="286"/>
    </location>
    <ligand>
        <name>carbamoyl phosphate</name>
        <dbReference type="ChEBI" id="CHEBI:58228"/>
    </ligand>
</feature>
<keyword id="KW-0028">Amino-acid biosynthesis</keyword>
<keyword id="KW-0055">Arginine biosynthesis</keyword>
<keyword id="KW-0963">Cytoplasm</keyword>
<keyword id="KW-1185">Reference proteome</keyword>
<keyword id="KW-0808">Transferase</keyword>
<gene>
    <name evidence="2" type="primary">argF</name>
    <name type="ordered locus">Dde_2532</name>
</gene>
<proteinExistence type="inferred from homology"/>
<dbReference type="EC" id="2.1.3.3" evidence="2"/>
<dbReference type="EMBL" id="CP000112">
    <property type="protein sequence ID" value="ABB39329.1"/>
    <property type="molecule type" value="Genomic_DNA"/>
</dbReference>
<dbReference type="RefSeq" id="WP_011368381.1">
    <property type="nucleotide sequence ID" value="NC_007519.1"/>
</dbReference>
<dbReference type="SMR" id="Q30YB7"/>
<dbReference type="STRING" id="207559.Dde_2532"/>
<dbReference type="KEGG" id="dde:Dde_2532"/>
<dbReference type="eggNOG" id="COG0078">
    <property type="taxonomic scope" value="Bacteria"/>
</dbReference>
<dbReference type="HOGENOM" id="CLU_043846_3_2_7"/>
<dbReference type="UniPathway" id="UPA00068">
    <property type="reaction ID" value="UER00112"/>
</dbReference>
<dbReference type="Proteomes" id="UP000002710">
    <property type="component" value="Chromosome"/>
</dbReference>
<dbReference type="GO" id="GO:0005737">
    <property type="term" value="C:cytoplasm"/>
    <property type="evidence" value="ECO:0007669"/>
    <property type="project" value="UniProtKB-SubCell"/>
</dbReference>
<dbReference type="GO" id="GO:0016597">
    <property type="term" value="F:amino acid binding"/>
    <property type="evidence" value="ECO:0007669"/>
    <property type="project" value="InterPro"/>
</dbReference>
<dbReference type="GO" id="GO:0004585">
    <property type="term" value="F:ornithine carbamoyltransferase activity"/>
    <property type="evidence" value="ECO:0007669"/>
    <property type="project" value="UniProtKB-UniRule"/>
</dbReference>
<dbReference type="GO" id="GO:0042450">
    <property type="term" value="P:arginine biosynthetic process via ornithine"/>
    <property type="evidence" value="ECO:0007669"/>
    <property type="project" value="TreeGrafter"/>
</dbReference>
<dbReference type="GO" id="GO:0019240">
    <property type="term" value="P:citrulline biosynthetic process"/>
    <property type="evidence" value="ECO:0007669"/>
    <property type="project" value="TreeGrafter"/>
</dbReference>
<dbReference type="GO" id="GO:0006526">
    <property type="term" value="P:L-arginine biosynthetic process"/>
    <property type="evidence" value="ECO:0007669"/>
    <property type="project" value="UniProtKB-UniRule"/>
</dbReference>
<dbReference type="FunFam" id="3.40.50.1370:FF:000008">
    <property type="entry name" value="Ornithine carbamoyltransferase"/>
    <property type="match status" value="1"/>
</dbReference>
<dbReference type="Gene3D" id="3.40.50.1370">
    <property type="entry name" value="Aspartate/ornithine carbamoyltransferase"/>
    <property type="match status" value="2"/>
</dbReference>
<dbReference type="HAMAP" id="MF_01109">
    <property type="entry name" value="OTCase"/>
    <property type="match status" value="1"/>
</dbReference>
<dbReference type="InterPro" id="IPR006132">
    <property type="entry name" value="Asp/Orn_carbamoyltranf_P-bd"/>
</dbReference>
<dbReference type="InterPro" id="IPR006130">
    <property type="entry name" value="Asp/Orn_carbamoylTrfase"/>
</dbReference>
<dbReference type="InterPro" id="IPR036901">
    <property type="entry name" value="Asp/Orn_carbamoylTrfase_sf"/>
</dbReference>
<dbReference type="InterPro" id="IPR006131">
    <property type="entry name" value="Asp_carbamoyltransf_Asp/Orn-bd"/>
</dbReference>
<dbReference type="InterPro" id="IPR002292">
    <property type="entry name" value="Orn/put_carbamltrans"/>
</dbReference>
<dbReference type="InterPro" id="IPR024904">
    <property type="entry name" value="OTCase_ArgI"/>
</dbReference>
<dbReference type="NCBIfam" id="TIGR00658">
    <property type="entry name" value="orni_carb_tr"/>
    <property type="match status" value="1"/>
</dbReference>
<dbReference type="NCBIfam" id="NF001986">
    <property type="entry name" value="PRK00779.1"/>
    <property type="match status" value="1"/>
</dbReference>
<dbReference type="PANTHER" id="PTHR45753">
    <property type="entry name" value="ORNITHINE CARBAMOYLTRANSFERASE, MITOCHONDRIAL"/>
    <property type="match status" value="1"/>
</dbReference>
<dbReference type="PANTHER" id="PTHR45753:SF3">
    <property type="entry name" value="ORNITHINE TRANSCARBAMYLASE, MITOCHONDRIAL"/>
    <property type="match status" value="1"/>
</dbReference>
<dbReference type="Pfam" id="PF00185">
    <property type="entry name" value="OTCace"/>
    <property type="match status" value="1"/>
</dbReference>
<dbReference type="Pfam" id="PF02729">
    <property type="entry name" value="OTCace_N"/>
    <property type="match status" value="1"/>
</dbReference>
<dbReference type="PRINTS" id="PR00100">
    <property type="entry name" value="AOTCASE"/>
</dbReference>
<dbReference type="PRINTS" id="PR00102">
    <property type="entry name" value="OTCASE"/>
</dbReference>
<dbReference type="SUPFAM" id="SSF53671">
    <property type="entry name" value="Aspartate/ornithine carbamoyltransferase"/>
    <property type="match status" value="1"/>
</dbReference>
<dbReference type="PROSITE" id="PS00097">
    <property type="entry name" value="CARBAMOYLTRANSFERASE"/>
    <property type="match status" value="1"/>
</dbReference>
<name>OTC_OLEA2</name>
<reference key="1">
    <citation type="journal article" date="2011" name="J. Bacteriol.">
        <title>Complete genome sequence and updated annotation of Desulfovibrio alaskensis G20.</title>
        <authorList>
            <person name="Hauser L.J."/>
            <person name="Land M.L."/>
            <person name="Brown S.D."/>
            <person name="Larimer F."/>
            <person name="Keller K.L."/>
            <person name="Rapp-Giles B.J."/>
            <person name="Price M.N."/>
            <person name="Lin M."/>
            <person name="Bruce D.C."/>
            <person name="Detter J.C."/>
            <person name="Tapia R."/>
            <person name="Han C.S."/>
            <person name="Goodwin L.A."/>
            <person name="Cheng J.F."/>
            <person name="Pitluck S."/>
            <person name="Copeland A."/>
            <person name="Lucas S."/>
            <person name="Nolan M."/>
            <person name="Lapidus A.L."/>
            <person name="Palumbo A.V."/>
            <person name="Wall J.D."/>
        </authorList>
    </citation>
    <scope>NUCLEOTIDE SEQUENCE [LARGE SCALE GENOMIC DNA]</scope>
    <source>
        <strain>ATCC BAA-1058 / DSM 17464 / G20</strain>
    </source>
</reference>
<organism>
    <name type="scientific">Oleidesulfovibrio alaskensis (strain ATCC BAA-1058 / DSM 17464 / G20)</name>
    <name type="common">Desulfovibrio alaskensis</name>
    <dbReference type="NCBI Taxonomy" id="207559"/>
    <lineage>
        <taxon>Bacteria</taxon>
        <taxon>Pseudomonadati</taxon>
        <taxon>Thermodesulfobacteriota</taxon>
        <taxon>Desulfovibrionia</taxon>
        <taxon>Desulfovibrionales</taxon>
        <taxon>Desulfovibrionaceae</taxon>
        <taxon>Oleidesulfovibrio</taxon>
    </lineage>
</organism>
<accession>Q30YB7</accession>
<evidence type="ECO:0000250" key="1"/>
<evidence type="ECO:0000255" key="2">
    <source>
        <dbReference type="HAMAP-Rule" id="MF_01109"/>
    </source>
</evidence>
<comment type="function">
    <text evidence="1">Reversibly catalyzes the transfer of the carbamoyl group from carbamoyl phosphate (CP) to the N(epsilon) atom of ornithine (ORN) to produce L-citrulline.</text>
</comment>
<comment type="catalytic activity">
    <reaction evidence="2">
        <text>carbamoyl phosphate + L-ornithine = L-citrulline + phosphate + H(+)</text>
        <dbReference type="Rhea" id="RHEA:19513"/>
        <dbReference type="ChEBI" id="CHEBI:15378"/>
        <dbReference type="ChEBI" id="CHEBI:43474"/>
        <dbReference type="ChEBI" id="CHEBI:46911"/>
        <dbReference type="ChEBI" id="CHEBI:57743"/>
        <dbReference type="ChEBI" id="CHEBI:58228"/>
        <dbReference type="EC" id="2.1.3.3"/>
    </reaction>
</comment>
<comment type="pathway">
    <text evidence="2">Amino-acid biosynthesis; L-arginine biosynthesis; L-arginine from L-ornithine and carbamoyl phosphate: step 1/3.</text>
</comment>
<comment type="subcellular location">
    <subcellularLocation>
        <location evidence="2">Cytoplasm</location>
    </subcellularLocation>
</comment>
<comment type="similarity">
    <text evidence="2">Belongs to the aspartate/ornithine carbamoyltransferase superfamily. OTCase family.</text>
</comment>
<sequence>MTKHFTQIRDLGYQAAWDVLRRAKEMKDSRHRSTLLEGKSAIMLFEKASTRTRVSFETAVHQLGGKTIFMTPAESQLGRSEPLRDTARVLSRYNDLMIVRTFGQEKIDELVEYGSIPVINALTDEGHPCQVMSDMLTIYERTPDLEKVRVAWVGDGNNMANSWIEAAIFFKFELFMAFPEGYEPDRNLLALAMQAGAKIFLTHDPAMAVDGAHYVNTDVWASMGQEEEQKKREKAFAGFCVDDALMAKAAPDARFMHCLPAHRGEEVTEDVFESPASIVWDQAENRLHMQKALIEWVMEG</sequence>
<protein>
    <recommendedName>
        <fullName evidence="2">Ornithine carbamoyltransferase</fullName>
        <shortName evidence="2">OTCase</shortName>
        <ecNumber evidence="2">2.1.3.3</ecNumber>
    </recommendedName>
</protein>